<comment type="function">
    <text evidence="1">An essential GTPase that binds both GDP and GTP, with rapid nucleotide exchange. Plays a role in 16S rRNA processing and 30S ribosomal subunit biogenesis and possibly also in cell cycle regulation and energy metabolism.</text>
</comment>
<comment type="subunit">
    <text evidence="1">Monomer.</text>
</comment>
<comment type="subcellular location">
    <subcellularLocation>
        <location>Cytoplasm</location>
    </subcellularLocation>
    <subcellularLocation>
        <location evidence="1">Cell inner membrane</location>
        <topology evidence="1">Peripheral membrane protein</topology>
    </subcellularLocation>
</comment>
<comment type="similarity">
    <text evidence="1 2">Belongs to the TRAFAC class TrmE-Era-EngA-EngB-Septin-like GTPase superfamily. Era GTPase family.</text>
</comment>
<comment type="sequence caution" evidence="3">
    <conflict type="erroneous initiation">
        <sequence resource="EMBL-CDS" id="AAD07585"/>
    </conflict>
    <text>Extended N-terminus.</text>
</comment>
<protein>
    <recommendedName>
        <fullName evidence="1">GTPase Era</fullName>
    </recommendedName>
</protein>
<reference key="1">
    <citation type="journal article" date="1997" name="Nature">
        <title>The complete genome sequence of the gastric pathogen Helicobacter pylori.</title>
        <authorList>
            <person name="Tomb J.-F."/>
            <person name="White O."/>
            <person name="Kerlavage A.R."/>
            <person name="Clayton R.A."/>
            <person name="Sutton G.G."/>
            <person name="Fleischmann R.D."/>
            <person name="Ketchum K.A."/>
            <person name="Klenk H.-P."/>
            <person name="Gill S.R."/>
            <person name="Dougherty B.A."/>
            <person name="Nelson K.E."/>
            <person name="Quackenbush J."/>
            <person name="Zhou L."/>
            <person name="Kirkness E.F."/>
            <person name="Peterson S.N."/>
            <person name="Loftus B.J."/>
            <person name="Richardson D.L."/>
            <person name="Dodson R.J."/>
            <person name="Khalak H.G."/>
            <person name="Glodek A."/>
            <person name="McKenney K."/>
            <person name="FitzGerald L.M."/>
            <person name="Lee N."/>
            <person name="Adams M.D."/>
            <person name="Hickey E.K."/>
            <person name="Berg D.E."/>
            <person name="Gocayne J.D."/>
            <person name="Utterback T.R."/>
            <person name="Peterson J.D."/>
            <person name="Kelley J.M."/>
            <person name="Cotton M.D."/>
            <person name="Weidman J.F."/>
            <person name="Fujii C."/>
            <person name="Bowman C."/>
            <person name="Watthey L."/>
            <person name="Wallin E."/>
            <person name="Hayes W.S."/>
            <person name="Borodovsky M."/>
            <person name="Karp P.D."/>
            <person name="Smith H.O."/>
            <person name="Fraser C.M."/>
            <person name="Venter J.C."/>
        </authorList>
    </citation>
    <scope>NUCLEOTIDE SEQUENCE [LARGE SCALE GENOMIC DNA]</scope>
    <source>
        <strain>ATCC 700392 / 26695</strain>
    </source>
</reference>
<reference key="2">
    <citation type="submission" date="1997-01" db="EMBL/GenBank/DDBJ databases">
        <title>The Cag pathogenicity island of Helicobacter pylori.</title>
        <authorList>
            <person name="Akopyants N.S."/>
            <person name="Kersulyte D."/>
            <person name="Clifton S.W."/>
            <person name="Youree B.E."/>
            <person name="Reece C.A."/>
            <person name="Roe B.A."/>
            <person name="Berg D.E."/>
        </authorList>
    </citation>
    <scope>NUCLEOTIDE SEQUENCE [GENOMIC DNA]</scope>
</reference>
<proteinExistence type="inferred from homology"/>
<gene>
    <name evidence="1" type="primary">era</name>
    <name type="ordered locus">HP_0517</name>
</gene>
<dbReference type="EMBL" id="AE000511">
    <property type="protein sequence ID" value="AAD07585.1"/>
    <property type="status" value="ALT_INIT"/>
    <property type="molecule type" value="Genomic_DNA"/>
</dbReference>
<dbReference type="EMBL" id="AC000108">
    <property type="status" value="NOT_ANNOTATED_CDS"/>
    <property type="molecule type" value="Genomic_DNA"/>
</dbReference>
<dbReference type="PIR" id="E64584">
    <property type="entry name" value="E64584"/>
</dbReference>
<dbReference type="RefSeq" id="NP_207314.1">
    <property type="nucleotide sequence ID" value="NC_000915.1"/>
</dbReference>
<dbReference type="RefSeq" id="WP_001862438.1">
    <property type="nucleotide sequence ID" value="NC_018939.1"/>
</dbReference>
<dbReference type="SMR" id="P56059"/>
<dbReference type="FunCoup" id="P56059">
    <property type="interactions" value="342"/>
</dbReference>
<dbReference type="STRING" id="85962.HP_0517"/>
<dbReference type="PaxDb" id="85962-C694_02660"/>
<dbReference type="EnsemblBacteria" id="AAD07585">
    <property type="protein sequence ID" value="AAD07585"/>
    <property type="gene ID" value="HP_0517"/>
</dbReference>
<dbReference type="KEGG" id="heo:C694_02660"/>
<dbReference type="KEGG" id="hpy:HP_0517"/>
<dbReference type="PATRIC" id="fig|85962.47.peg.556"/>
<dbReference type="eggNOG" id="COG1159">
    <property type="taxonomic scope" value="Bacteria"/>
</dbReference>
<dbReference type="InParanoid" id="P56059"/>
<dbReference type="OrthoDB" id="9805918at2"/>
<dbReference type="PhylomeDB" id="P56059"/>
<dbReference type="Proteomes" id="UP000000429">
    <property type="component" value="Chromosome"/>
</dbReference>
<dbReference type="GO" id="GO:0005829">
    <property type="term" value="C:cytosol"/>
    <property type="evidence" value="ECO:0000318"/>
    <property type="project" value="GO_Central"/>
</dbReference>
<dbReference type="GO" id="GO:0005886">
    <property type="term" value="C:plasma membrane"/>
    <property type="evidence" value="ECO:0007669"/>
    <property type="project" value="UniProtKB-SubCell"/>
</dbReference>
<dbReference type="GO" id="GO:0005525">
    <property type="term" value="F:GTP binding"/>
    <property type="evidence" value="ECO:0007669"/>
    <property type="project" value="UniProtKB-UniRule"/>
</dbReference>
<dbReference type="GO" id="GO:0003924">
    <property type="term" value="F:GTPase activity"/>
    <property type="evidence" value="ECO:0007669"/>
    <property type="project" value="UniProtKB-UniRule"/>
</dbReference>
<dbReference type="GO" id="GO:0043024">
    <property type="term" value="F:ribosomal small subunit binding"/>
    <property type="evidence" value="ECO:0000318"/>
    <property type="project" value="GO_Central"/>
</dbReference>
<dbReference type="GO" id="GO:0019843">
    <property type="term" value="F:rRNA binding"/>
    <property type="evidence" value="ECO:0000318"/>
    <property type="project" value="GO_Central"/>
</dbReference>
<dbReference type="GO" id="GO:0070181">
    <property type="term" value="F:small ribosomal subunit rRNA binding"/>
    <property type="evidence" value="ECO:0007669"/>
    <property type="project" value="UniProtKB-UniRule"/>
</dbReference>
<dbReference type="GO" id="GO:0000028">
    <property type="term" value="P:ribosomal small subunit assembly"/>
    <property type="evidence" value="ECO:0000318"/>
    <property type="project" value="GO_Central"/>
</dbReference>
<dbReference type="CDD" id="cd04163">
    <property type="entry name" value="Era"/>
    <property type="match status" value="1"/>
</dbReference>
<dbReference type="CDD" id="cd22534">
    <property type="entry name" value="KH-II_Era"/>
    <property type="match status" value="1"/>
</dbReference>
<dbReference type="FunFam" id="3.30.300.20:FF:000034">
    <property type="entry name" value="GTPase Era"/>
    <property type="match status" value="1"/>
</dbReference>
<dbReference type="FunFam" id="3.40.50.300:FF:002442">
    <property type="entry name" value="GTPase Era"/>
    <property type="match status" value="1"/>
</dbReference>
<dbReference type="Gene3D" id="3.30.300.20">
    <property type="match status" value="1"/>
</dbReference>
<dbReference type="Gene3D" id="3.40.50.300">
    <property type="entry name" value="P-loop containing nucleotide triphosphate hydrolases"/>
    <property type="match status" value="1"/>
</dbReference>
<dbReference type="HAMAP" id="MF_00367">
    <property type="entry name" value="GTPase_Era"/>
    <property type="match status" value="1"/>
</dbReference>
<dbReference type="InterPro" id="IPR030388">
    <property type="entry name" value="G_ERA_dom"/>
</dbReference>
<dbReference type="InterPro" id="IPR006073">
    <property type="entry name" value="GTP-bd"/>
</dbReference>
<dbReference type="InterPro" id="IPR005662">
    <property type="entry name" value="GTPase_Era-like"/>
</dbReference>
<dbReference type="InterPro" id="IPR015946">
    <property type="entry name" value="KH_dom-like_a/b"/>
</dbReference>
<dbReference type="InterPro" id="IPR004044">
    <property type="entry name" value="KH_dom_type_2"/>
</dbReference>
<dbReference type="InterPro" id="IPR009019">
    <property type="entry name" value="KH_sf_prok-type"/>
</dbReference>
<dbReference type="InterPro" id="IPR027417">
    <property type="entry name" value="P-loop_NTPase"/>
</dbReference>
<dbReference type="InterPro" id="IPR005225">
    <property type="entry name" value="Small_GTP-bd"/>
</dbReference>
<dbReference type="NCBIfam" id="TIGR00436">
    <property type="entry name" value="era"/>
    <property type="match status" value="1"/>
</dbReference>
<dbReference type="NCBIfam" id="NF000908">
    <property type="entry name" value="PRK00089.1"/>
    <property type="match status" value="1"/>
</dbReference>
<dbReference type="NCBIfam" id="TIGR00231">
    <property type="entry name" value="small_GTP"/>
    <property type="match status" value="1"/>
</dbReference>
<dbReference type="PANTHER" id="PTHR42698">
    <property type="entry name" value="GTPASE ERA"/>
    <property type="match status" value="1"/>
</dbReference>
<dbReference type="PANTHER" id="PTHR42698:SF1">
    <property type="entry name" value="GTPASE ERA, MITOCHONDRIAL"/>
    <property type="match status" value="1"/>
</dbReference>
<dbReference type="Pfam" id="PF07650">
    <property type="entry name" value="KH_2"/>
    <property type="match status" value="1"/>
</dbReference>
<dbReference type="Pfam" id="PF01926">
    <property type="entry name" value="MMR_HSR1"/>
    <property type="match status" value="1"/>
</dbReference>
<dbReference type="SUPFAM" id="SSF52540">
    <property type="entry name" value="P-loop containing nucleoside triphosphate hydrolases"/>
    <property type="match status" value="1"/>
</dbReference>
<dbReference type="SUPFAM" id="SSF54814">
    <property type="entry name" value="Prokaryotic type KH domain (KH-domain type II)"/>
    <property type="match status" value="1"/>
</dbReference>
<dbReference type="PROSITE" id="PS51713">
    <property type="entry name" value="G_ERA"/>
    <property type="match status" value="1"/>
</dbReference>
<dbReference type="PROSITE" id="PS50823">
    <property type="entry name" value="KH_TYPE_2"/>
    <property type="match status" value="1"/>
</dbReference>
<organism>
    <name type="scientific">Helicobacter pylori (strain ATCC 700392 / 26695)</name>
    <name type="common">Campylobacter pylori</name>
    <dbReference type="NCBI Taxonomy" id="85962"/>
    <lineage>
        <taxon>Bacteria</taxon>
        <taxon>Pseudomonadati</taxon>
        <taxon>Campylobacterota</taxon>
        <taxon>Epsilonproteobacteria</taxon>
        <taxon>Campylobacterales</taxon>
        <taxon>Helicobacteraceae</taxon>
        <taxon>Helicobacter</taxon>
    </lineage>
</organism>
<name>ERA_HELPY</name>
<sequence length="301" mass="34591">MKTKAGFVALIGKPNAGKSTLLNTLLNAHLALVSHKANATRKLMKCIVPFKDKEWYESQIIFLDTPGLHHQEKLLNQCMLSQALKAMGDAELCVFLASVHDDLKGYEEFLSLCQKPHILALSKIDTATHKQVLQKLQEYQQYDSQFLALVPLSAKKSQNLNALLECISQHLSPSAWLFEKDLMSDEKMRDIYKEIIRESLFDFLSDEIPYESDVMIDKFIEEERIDKVYARIIVEKESQKKIVIGKNGVNIKRIGTNARLKMQEVGEKKVFLNLQVIAQKSWSKEEKSLQKLGYIHRRNRD</sequence>
<accession>P56059</accession>
<accession>P96520</accession>
<keyword id="KW-0997">Cell inner membrane</keyword>
<keyword id="KW-1003">Cell membrane</keyword>
<keyword id="KW-0963">Cytoplasm</keyword>
<keyword id="KW-0342">GTP-binding</keyword>
<keyword id="KW-0472">Membrane</keyword>
<keyword id="KW-0547">Nucleotide-binding</keyword>
<keyword id="KW-1185">Reference proteome</keyword>
<keyword id="KW-0690">Ribosome biogenesis</keyword>
<keyword id="KW-0694">RNA-binding</keyword>
<keyword id="KW-0699">rRNA-binding</keyword>
<evidence type="ECO:0000255" key="1">
    <source>
        <dbReference type="HAMAP-Rule" id="MF_00367"/>
    </source>
</evidence>
<evidence type="ECO:0000255" key="2">
    <source>
        <dbReference type="PROSITE-ProRule" id="PRU01050"/>
    </source>
</evidence>
<evidence type="ECO:0000305" key="3"/>
<feature type="chain" id="PRO_0000180018" description="GTPase Era">
    <location>
        <begin position="1"/>
        <end position="301"/>
    </location>
</feature>
<feature type="domain" description="Era-type G" evidence="2">
    <location>
        <begin position="4"/>
        <end position="173"/>
    </location>
</feature>
<feature type="domain" description="KH type-2" evidence="1">
    <location>
        <begin position="204"/>
        <end position="280"/>
    </location>
</feature>
<feature type="region of interest" description="G1" evidence="2">
    <location>
        <begin position="12"/>
        <end position="19"/>
    </location>
</feature>
<feature type="region of interest" description="G2" evidence="2">
    <location>
        <begin position="38"/>
        <end position="42"/>
    </location>
</feature>
<feature type="region of interest" description="G3" evidence="2">
    <location>
        <begin position="64"/>
        <end position="67"/>
    </location>
</feature>
<feature type="region of interest" description="G4" evidence="2">
    <location>
        <begin position="122"/>
        <end position="125"/>
    </location>
</feature>
<feature type="region of interest" description="G5" evidence="2">
    <location>
        <begin position="152"/>
        <end position="154"/>
    </location>
</feature>
<feature type="binding site" evidence="1">
    <location>
        <begin position="12"/>
        <end position="19"/>
    </location>
    <ligand>
        <name>GTP</name>
        <dbReference type="ChEBI" id="CHEBI:37565"/>
    </ligand>
</feature>
<feature type="binding site" evidence="1">
    <location>
        <begin position="64"/>
        <end position="68"/>
    </location>
    <ligand>
        <name>GTP</name>
        <dbReference type="ChEBI" id="CHEBI:37565"/>
    </ligand>
</feature>
<feature type="binding site" evidence="1">
    <location>
        <begin position="122"/>
        <end position="125"/>
    </location>
    <ligand>
        <name>GTP</name>
        <dbReference type="ChEBI" id="CHEBI:37565"/>
    </ligand>
</feature>
<feature type="sequence conflict" description="In Ref. 2; AC000108." evidence="3" ref="2">
    <original>W</original>
    <variation>G</variation>
    <location>
        <position position="55"/>
    </location>
</feature>
<feature type="sequence conflict" description="In Ref. 2; AC000108." evidence="3" ref="2">
    <original>S</original>
    <variation>N</variation>
    <location>
        <position position="111"/>
    </location>
</feature>
<feature type="sequence conflict" description="In Ref. 2; AC000108." evidence="3" ref="2">
    <original>Q</original>
    <variation>K</variation>
    <location>
        <position position="141"/>
    </location>
</feature>
<feature type="sequence conflict" description="In Ref. 2; AC000108." evidence="3" ref="2">
    <original>D</original>
    <variation>S</variation>
    <location>
        <position position="143"/>
    </location>
</feature>
<feature type="sequence conflict" description="In Ref. 2; AC000108." evidence="3" ref="2">
    <original>A</original>
    <variation>D</variation>
    <location>
        <position position="148"/>
    </location>
</feature>
<feature type="sequence conflict" description="In Ref. 2; AC000108." evidence="3" ref="2">
    <original>A</original>
    <variation>T</variation>
    <location>
        <position position="162"/>
    </location>
</feature>
<feature type="sequence conflict" description="In Ref. 2; AC000108." evidence="3" ref="2">
    <original>QH</original>
    <variation>KY</variation>
    <location>
        <begin position="169"/>
        <end position="170"/>
    </location>
</feature>
<feature type="sequence conflict" description="In Ref. 2; AC000108." evidence="3" ref="2">
    <original>N</original>
    <variation>S</variation>
    <location>
        <position position="257"/>
    </location>
</feature>
<feature type="sequence conflict" description="In Ref. 2; AC000108." evidence="3" ref="2">
    <original>HR</original>
    <variation>YQ</variation>
    <location>
        <begin position="296"/>
        <end position="297"/>
    </location>
</feature>